<organism>
    <name type="scientific">Acinetobacter baylyi (strain ATCC 33305 / BD413 / ADP1)</name>
    <dbReference type="NCBI Taxonomy" id="62977"/>
    <lineage>
        <taxon>Bacteria</taxon>
        <taxon>Pseudomonadati</taxon>
        <taxon>Pseudomonadota</taxon>
        <taxon>Gammaproteobacteria</taxon>
        <taxon>Moraxellales</taxon>
        <taxon>Moraxellaceae</taxon>
        <taxon>Acinetobacter</taxon>
    </lineage>
</organism>
<dbReference type="EC" id="1.7.1.13" evidence="1"/>
<dbReference type="EMBL" id="CR543861">
    <property type="protein sequence ID" value="CAG69052.1"/>
    <property type="molecule type" value="Genomic_DNA"/>
</dbReference>
<dbReference type="RefSeq" id="WP_004927915.1">
    <property type="nucleotide sequence ID" value="NC_005966.1"/>
</dbReference>
<dbReference type="SMR" id="Q6FA61"/>
<dbReference type="STRING" id="202950.GCA_001485005_00136"/>
<dbReference type="GeneID" id="45234589"/>
<dbReference type="KEGG" id="aci:ACIAD2261"/>
<dbReference type="eggNOG" id="COG0780">
    <property type="taxonomic scope" value="Bacteria"/>
</dbReference>
<dbReference type="eggNOG" id="COG2904">
    <property type="taxonomic scope" value="Bacteria"/>
</dbReference>
<dbReference type="HOGENOM" id="CLU_054738_0_0_6"/>
<dbReference type="OrthoDB" id="9789995at2"/>
<dbReference type="BioCyc" id="ASP62977:ACIAD_RS10355-MONOMER"/>
<dbReference type="UniPathway" id="UPA00392"/>
<dbReference type="Proteomes" id="UP000000430">
    <property type="component" value="Chromosome"/>
</dbReference>
<dbReference type="GO" id="GO:0005737">
    <property type="term" value="C:cytoplasm"/>
    <property type="evidence" value="ECO:0007669"/>
    <property type="project" value="UniProtKB-SubCell"/>
</dbReference>
<dbReference type="GO" id="GO:0033739">
    <property type="term" value="F:preQ1 synthase activity"/>
    <property type="evidence" value="ECO:0007669"/>
    <property type="project" value="UniProtKB-UniRule"/>
</dbReference>
<dbReference type="GO" id="GO:0008616">
    <property type="term" value="P:queuosine biosynthetic process"/>
    <property type="evidence" value="ECO:0007669"/>
    <property type="project" value="UniProtKB-UniRule"/>
</dbReference>
<dbReference type="GO" id="GO:0006400">
    <property type="term" value="P:tRNA modification"/>
    <property type="evidence" value="ECO:0007669"/>
    <property type="project" value="UniProtKB-UniRule"/>
</dbReference>
<dbReference type="Gene3D" id="3.30.1130.10">
    <property type="match status" value="2"/>
</dbReference>
<dbReference type="HAMAP" id="MF_00817">
    <property type="entry name" value="QueF_type2"/>
    <property type="match status" value="1"/>
</dbReference>
<dbReference type="InterPro" id="IPR043133">
    <property type="entry name" value="GTP-CH-I_C/QueF"/>
</dbReference>
<dbReference type="InterPro" id="IPR050084">
    <property type="entry name" value="NADPH_dep_7-cyano-7-deazaG_red"/>
</dbReference>
<dbReference type="InterPro" id="IPR029500">
    <property type="entry name" value="QueF"/>
</dbReference>
<dbReference type="InterPro" id="IPR029139">
    <property type="entry name" value="QueF_N"/>
</dbReference>
<dbReference type="InterPro" id="IPR016428">
    <property type="entry name" value="QueF_type2"/>
</dbReference>
<dbReference type="NCBIfam" id="TIGR03138">
    <property type="entry name" value="QueF"/>
    <property type="match status" value="1"/>
</dbReference>
<dbReference type="PANTHER" id="PTHR34354">
    <property type="entry name" value="NADPH-DEPENDENT 7-CYANO-7-DEAZAGUANINE REDUCTASE"/>
    <property type="match status" value="1"/>
</dbReference>
<dbReference type="PANTHER" id="PTHR34354:SF1">
    <property type="entry name" value="NADPH-DEPENDENT 7-CYANO-7-DEAZAGUANINE REDUCTASE"/>
    <property type="match status" value="1"/>
</dbReference>
<dbReference type="Pfam" id="PF14489">
    <property type="entry name" value="QueF"/>
    <property type="match status" value="1"/>
</dbReference>
<dbReference type="Pfam" id="PF14819">
    <property type="entry name" value="QueF_N"/>
    <property type="match status" value="1"/>
</dbReference>
<dbReference type="PIRSF" id="PIRSF004750">
    <property type="entry name" value="Nitrile_oxidored_YqcD_prd"/>
    <property type="match status" value="1"/>
</dbReference>
<dbReference type="SUPFAM" id="SSF55620">
    <property type="entry name" value="Tetrahydrobiopterin biosynthesis enzymes-like"/>
    <property type="match status" value="1"/>
</dbReference>
<comment type="function">
    <text evidence="1">Catalyzes the NADPH-dependent reduction of 7-cyano-7-deazaguanine (preQ0) to 7-aminomethyl-7-deazaguanine (preQ1).</text>
</comment>
<comment type="catalytic activity">
    <reaction evidence="1">
        <text>7-aminomethyl-7-carbaguanine + 2 NADP(+) = 7-cyano-7-deazaguanine + 2 NADPH + 3 H(+)</text>
        <dbReference type="Rhea" id="RHEA:13409"/>
        <dbReference type="ChEBI" id="CHEBI:15378"/>
        <dbReference type="ChEBI" id="CHEBI:45075"/>
        <dbReference type="ChEBI" id="CHEBI:57783"/>
        <dbReference type="ChEBI" id="CHEBI:58349"/>
        <dbReference type="ChEBI" id="CHEBI:58703"/>
        <dbReference type="EC" id="1.7.1.13"/>
    </reaction>
</comment>
<comment type="pathway">
    <text evidence="1">tRNA modification; tRNA-queuosine biosynthesis.</text>
</comment>
<comment type="subunit">
    <text evidence="1">Homodimer.</text>
</comment>
<comment type="subcellular location">
    <subcellularLocation>
        <location evidence="1">Cytoplasm</location>
    </subcellularLocation>
</comment>
<comment type="similarity">
    <text evidence="1">Belongs to the GTP cyclohydrolase I family. QueF type 2 subfamily.</text>
</comment>
<name>QUEF_ACIAD</name>
<accession>Q6FA61</accession>
<evidence type="ECO:0000255" key="1">
    <source>
        <dbReference type="HAMAP-Rule" id="MF_00817"/>
    </source>
</evidence>
<proteinExistence type="inferred from homology"/>
<gene>
    <name evidence="1" type="primary">queF</name>
    <name type="ordered locus">ACIAD2261</name>
</gene>
<sequence length="271" mass="31042">MSVEQSLLGKETEYPTTYSPSVLFPISRDAAREKYAQIEGISQGKDWWHVFELSWLNSDNIPQVAIGRITLPATSPYLIESKSLKLYFNSLNFHVFASKQELIDLVEKDLSQAANAKVSLELFDVDSLEISKPSGMCIDDLKPERLESHPDASLLKLDANEQHDADVTLYSHLLRSNCPVTGQPDWGTVFIRYTGRKHCYRSILAYIISYRQHNGFHEQCVEQIYADIWKNLQPEKLMVYATYTRRGGLDINPCRVSDLSWMPNPIRLARQ</sequence>
<keyword id="KW-0963">Cytoplasm</keyword>
<keyword id="KW-0521">NADP</keyword>
<keyword id="KW-0560">Oxidoreductase</keyword>
<keyword id="KW-0671">Queuosine biosynthesis</keyword>
<feature type="chain" id="PRO_0000163018" description="NADPH-dependent 7-cyano-7-deazaguanine reductase">
    <location>
        <begin position="1"/>
        <end position="271"/>
    </location>
</feature>
<feature type="active site" description="Thioimide intermediate" evidence="1">
    <location>
        <position position="178"/>
    </location>
</feature>
<feature type="active site" description="Proton donor" evidence="1">
    <location>
        <position position="185"/>
    </location>
</feature>
<feature type="binding site" evidence="1">
    <location>
        <begin position="79"/>
        <end position="81"/>
    </location>
    <ligand>
        <name>substrate</name>
    </ligand>
</feature>
<feature type="binding site" evidence="1">
    <location>
        <begin position="81"/>
        <end position="82"/>
    </location>
    <ligand>
        <name>NADPH</name>
        <dbReference type="ChEBI" id="CHEBI:57783"/>
    </ligand>
</feature>
<feature type="binding site" evidence="1">
    <location>
        <begin position="217"/>
        <end position="218"/>
    </location>
    <ligand>
        <name>substrate</name>
    </ligand>
</feature>
<feature type="binding site" evidence="1">
    <location>
        <begin position="246"/>
        <end position="247"/>
    </location>
    <ligand>
        <name>NADPH</name>
        <dbReference type="ChEBI" id="CHEBI:57783"/>
    </ligand>
</feature>
<protein>
    <recommendedName>
        <fullName evidence="1">NADPH-dependent 7-cyano-7-deazaguanine reductase</fullName>
        <ecNumber evidence="1">1.7.1.13</ecNumber>
    </recommendedName>
    <alternativeName>
        <fullName evidence="1">7-cyano-7-carbaguanine reductase</fullName>
    </alternativeName>
    <alternativeName>
        <fullName evidence="1">NADPH-dependent nitrile oxidoreductase</fullName>
    </alternativeName>
    <alternativeName>
        <fullName evidence="1">PreQ(0) reductase</fullName>
    </alternativeName>
</protein>
<reference key="1">
    <citation type="journal article" date="2004" name="Nucleic Acids Res.">
        <title>Unique features revealed by the genome sequence of Acinetobacter sp. ADP1, a versatile and naturally transformation competent bacterium.</title>
        <authorList>
            <person name="Barbe V."/>
            <person name="Vallenet D."/>
            <person name="Fonknechten N."/>
            <person name="Kreimeyer A."/>
            <person name="Oztas S."/>
            <person name="Labarre L."/>
            <person name="Cruveiller S."/>
            <person name="Robert C."/>
            <person name="Duprat S."/>
            <person name="Wincker P."/>
            <person name="Ornston L.N."/>
            <person name="Weissenbach J."/>
            <person name="Marliere P."/>
            <person name="Cohen G.N."/>
            <person name="Medigue C."/>
        </authorList>
    </citation>
    <scope>NUCLEOTIDE SEQUENCE [LARGE SCALE GENOMIC DNA]</scope>
    <source>
        <strain>ATCC 33305 / BD413 / ADP1</strain>
    </source>
</reference>